<proteinExistence type="inferred from homology"/>
<comment type="function">
    <text evidence="1">Catalyzes the last two steps in the biosynthesis of 5-methylaminomethyl-2-thiouridine (mnm(5)s(2)U) at the wobble position (U34) in tRNA. Catalyzes the FAD-dependent demodification of cmnm(5)s(2)U34 to nm(5)s(2)U34, followed by the transfer of a methyl group from S-adenosyl-L-methionine to nm(5)s(2)U34, to form mnm(5)s(2)U34.</text>
</comment>
<comment type="catalytic activity">
    <reaction evidence="1">
        <text>5-aminomethyl-2-thiouridine(34) in tRNA + S-adenosyl-L-methionine = 5-methylaminomethyl-2-thiouridine(34) in tRNA + S-adenosyl-L-homocysteine + H(+)</text>
        <dbReference type="Rhea" id="RHEA:19569"/>
        <dbReference type="Rhea" id="RHEA-COMP:10195"/>
        <dbReference type="Rhea" id="RHEA-COMP:10197"/>
        <dbReference type="ChEBI" id="CHEBI:15378"/>
        <dbReference type="ChEBI" id="CHEBI:57856"/>
        <dbReference type="ChEBI" id="CHEBI:59789"/>
        <dbReference type="ChEBI" id="CHEBI:74454"/>
        <dbReference type="ChEBI" id="CHEBI:74455"/>
        <dbReference type="EC" id="2.1.1.61"/>
    </reaction>
</comment>
<comment type="cofactor">
    <cofactor evidence="1">
        <name>FAD</name>
        <dbReference type="ChEBI" id="CHEBI:57692"/>
    </cofactor>
</comment>
<comment type="subcellular location">
    <subcellularLocation>
        <location evidence="1">Cytoplasm</location>
    </subcellularLocation>
</comment>
<comment type="similarity">
    <text evidence="1">In the N-terminal section; belongs to the methyltransferase superfamily. tRNA (mnm(5)s(2)U34)-methyltransferase family.</text>
</comment>
<comment type="similarity">
    <text evidence="1">In the C-terminal section; belongs to the DAO family.</text>
</comment>
<reference key="1">
    <citation type="submission" date="2008-05" db="EMBL/GenBank/DDBJ databases">
        <title>Complete sequence of Shigella boydii serotype 18 strain BS512.</title>
        <authorList>
            <person name="Rasko D.A."/>
            <person name="Rosovitz M."/>
            <person name="Maurelli A.T."/>
            <person name="Myers G."/>
            <person name="Seshadri R."/>
            <person name="Cer R."/>
            <person name="Jiang L."/>
            <person name="Ravel J."/>
            <person name="Sebastian Y."/>
        </authorList>
    </citation>
    <scope>NUCLEOTIDE SEQUENCE [LARGE SCALE GENOMIC DNA]</scope>
    <source>
        <strain>CDC 3083-94 / BS512</strain>
    </source>
</reference>
<evidence type="ECO:0000255" key="1">
    <source>
        <dbReference type="HAMAP-Rule" id="MF_01102"/>
    </source>
</evidence>
<accession>B2TWA6</accession>
<protein>
    <recommendedName>
        <fullName evidence="1">tRNA 5-methylaminomethyl-2-thiouridine biosynthesis bifunctional protein MnmC</fullName>
        <shortName evidence="1">tRNA mnm(5)s(2)U biosynthesis bifunctional protein</shortName>
    </recommendedName>
    <domain>
        <recommendedName>
            <fullName evidence="1">tRNA (mnm(5)s(2)U34)-methyltransferase</fullName>
            <ecNumber evidence="1">2.1.1.61</ecNumber>
        </recommendedName>
    </domain>
    <domain>
        <recommendedName>
            <fullName evidence="1">FAD-dependent cmnm(5)s(2)U34 oxidoreductase</fullName>
            <ecNumber evidence="1">1.5.-.-</ecNumber>
        </recommendedName>
    </domain>
</protein>
<gene>
    <name evidence="1" type="primary">mnmC</name>
    <name type="ordered locus">SbBS512_E2702</name>
</gene>
<feature type="chain" id="PRO_0000348039" description="tRNA 5-methylaminomethyl-2-thiouridine biosynthesis bifunctional protein MnmC">
    <location>
        <begin position="1"/>
        <end position="668"/>
    </location>
</feature>
<feature type="region of interest" description="tRNA (mnm(5)s(2)U34)-methyltransferase">
    <location>
        <begin position="1"/>
        <end position="245"/>
    </location>
</feature>
<feature type="region of interest" description="FAD-dependent cmnm(5)s(2)U34 oxidoreductase">
    <location>
        <begin position="270"/>
        <end position="668"/>
    </location>
</feature>
<organism>
    <name type="scientific">Shigella boydii serotype 18 (strain CDC 3083-94 / BS512)</name>
    <dbReference type="NCBI Taxonomy" id="344609"/>
    <lineage>
        <taxon>Bacteria</taxon>
        <taxon>Pseudomonadati</taxon>
        <taxon>Pseudomonadota</taxon>
        <taxon>Gammaproteobacteria</taxon>
        <taxon>Enterobacterales</taxon>
        <taxon>Enterobacteriaceae</taxon>
        <taxon>Shigella</taxon>
    </lineage>
</organism>
<name>MNMC_SHIB3</name>
<keyword id="KW-0963">Cytoplasm</keyword>
<keyword id="KW-0274">FAD</keyword>
<keyword id="KW-0285">Flavoprotein</keyword>
<keyword id="KW-0489">Methyltransferase</keyword>
<keyword id="KW-0511">Multifunctional enzyme</keyword>
<keyword id="KW-0560">Oxidoreductase</keyword>
<keyword id="KW-1185">Reference proteome</keyword>
<keyword id="KW-0949">S-adenosyl-L-methionine</keyword>
<keyword id="KW-0808">Transferase</keyword>
<keyword id="KW-0819">tRNA processing</keyword>
<dbReference type="EC" id="2.1.1.61" evidence="1"/>
<dbReference type="EC" id="1.5.-.-" evidence="1"/>
<dbReference type="EMBL" id="CP001063">
    <property type="protein sequence ID" value="ACD06927.1"/>
    <property type="molecule type" value="Genomic_DNA"/>
</dbReference>
<dbReference type="RefSeq" id="WP_000683794.1">
    <property type="nucleotide sequence ID" value="NC_010658.1"/>
</dbReference>
<dbReference type="SMR" id="B2TWA6"/>
<dbReference type="STRING" id="344609.SbBS512_E2702"/>
<dbReference type="KEGG" id="sbc:SbBS512_E2702"/>
<dbReference type="HOGENOM" id="CLU_022427_1_0_6"/>
<dbReference type="Proteomes" id="UP000001030">
    <property type="component" value="Chromosome"/>
</dbReference>
<dbReference type="GO" id="GO:0005737">
    <property type="term" value="C:cytoplasm"/>
    <property type="evidence" value="ECO:0007669"/>
    <property type="project" value="UniProtKB-SubCell"/>
</dbReference>
<dbReference type="GO" id="GO:0050660">
    <property type="term" value="F:flavin adenine dinucleotide binding"/>
    <property type="evidence" value="ECO:0007669"/>
    <property type="project" value="UniProtKB-UniRule"/>
</dbReference>
<dbReference type="GO" id="GO:0016645">
    <property type="term" value="F:oxidoreductase activity, acting on the CH-NH group of donors"/>
    <property type="evidence" value="ECO:0007669"/>
    <property type="project" value="InterPro"/>
</dbReference>
<dbReference type="GO" id="GO:0004808">
    <property type="term" value="F:tRNA (5-methylaminomethyl-2-thiouridylate)(34)-methyltransferase activity"/>
    <property type="evidence" value="ECO:0007669"/>
    <property type="project" value="UniProtKB-EC"/>
</dbReference>
<dbReference type="GO" id="GO:0032259">
    <property type="term" value="P:methylation"/>
    <property type="evidence" value="ECO:0007669"/>
    <property type="project" value="UniProtKB-KW"/>
</dbReference>
<dbReference type="GO" id="GO:0002098">
    <property type="term" value="P:tRNA wobble uridine modification"/>
    <property type="evidence" value="ECO:0007669"/>
    <property type="project" value="TreeGrafter"/>
</dbReference>
<dbReference type="FunFam" id="3.40.50.150:FF:000107">
    <property type="entry name" value="tRNA 5-methylaminomethyl-2-thiouridine biosynthesis bifunctional protein MnmC"/>
    <property type="match status" value="1"/>
</dbReference>
<dbReference type="Gene3D" id="3.30.9.10">
    <property type="entry name" value="D-Amino Acid Oxidase, subunit A, domain 2"/>
    <property type="match status" value="1"/>
</dbReference>
<dbReference type="Gene3D" id="3.50.50.60">
    <property type="entry name" value="FAD/NAD(P)-binding domain"/>
    <property type="match status" value="1"/>
</dbReference>
<dbReference type="Gene3D" id="3.40.50.150">
    <property type="entry name" value="Vaccinia Virus protein VP39"/>
    <property type="match status" value="1"/>
</dbReference>
<dbReference type="HAMAP" id="MF_01102">
    <property type="entry name" value="MnmC"/>
    <property type="match status" value="1"/>
</dbReference>
<dbReference type="InterPro" id="IPR006076">
    <property type="entry name" value="FAD-dep_OxRdtase"/>
</dbReference>
<dbReference type="InterPro" id="IPR036188">
    <property type="entry name" value="FAD/NAD-bd_sf"/>
</dbReference>
<dbReference type="InterPro" id="IPR008471">
    <property type="entry name" value="MnmC-like_methylTransf"/>
</dbReference>
<dbReference type="InterPro" id="IPR029063">
    <property type="entry name" value="SAM-dependent_MTases_sf"/>
</dbReference>
<dbReference type="InterPro" id="IPR023032">
    <property type="entry name" value="tRNA_MAMT_biosynth_bifunc_MnmC"/>
</dbReference>
<dbReference type="InterPro" id="IPR047785">
    <property type="entry name" value="tRNA_MNMC2"/>
</dbReference>
<dbReference type="InterPro" id="IPR017610">
    <property type="entry name" value="tRNA_S-uridine_synth_MnmC_C"/>
</dbReference>
<dbReference type="NCBIfam" id="TIGR03197">
    <property type="entry name" value="MnmC_Cterm"/>
    <property type="match status" value="1"/>
</dbReference>
<dbReference type="NCBIfam" id="NF002480">
    <property type="entry name" value="PRK01747.1-1"/>
    <property type="match status" value="1"/>
</dbReference>
<dbReference type="NCBIfam" id="NF002481">
    <property type="entry name" value="PRK01747.1-2"/>
    <property type="match status" value="1"/>
</dbReference>
<dbReference type="NCBIfam" id="NF002482">
    <property type="entry name" value="PRK01747.1-3"/>
    <property type="match status" value="1"/>
</dbReference>
<dbReference type="NCBIfam" id="NF002484">
    <property type="entry name" value="PRK01747.1-5"/>
    <property type="match status" value="1"/>
</dbReference>
<dbReference type="NCBIfam" id="NF033855">
    <property type="entry name" value="tRNA_MNMC2"/>
    <property type="match status" value="1"/>
</dbReference>
<dbReference type="PANTHER" id="PTHR13847">
    <property type="entry name" value="SARCOSINE DEHYDROGENASE-RELATED"/>
    <property type="match status" value="1"/>
</dbReference>
<dbReference type="PANTHER" id="PTHR13847:SF283">
    <property type="entry name" value="TRNA 5-METHYLAMINOMETHYL-2-THIOURIDINE BIOSYNTHESIS BIFUNCTIONAL PROTEIN MNMC"/>
    <property type="match status" value="1"/>
</dbReference>
<dbReference type="Pfam" id="PF01266">
    <property type="entry name" value="DAO"/>
    <property type="match status" value="1"/>
</dbReference>
<dbReference type="Pfam" id="PF05430">
    <property type="entry name" value="Methyltransf_30"/>
    <property type="match status" value="1"/>
</dbReference>
<dbReference type="SUPFAM" id="SSF51905">
    <property type="entry name" value="FAD/NAD(P)-binding domain"/>
    <property type="match status" value="1"/>
</dbReference>
<sequence length="668" mass="74480">MKHYSIQPANLEFNAEGTPVSRDFDDVYFSNDNGLEETRYVFLGGNQLEVRFPEHPHPLFVVAESGFGTGLNFLTLWQAFDQFREAHPQAQLQRLHFISFEKFPLTRADLALAHQHWPELAPWAEQLQAQWPMPLPGCHRLLLDEGRVTLDLWFGDINELTSQLDDSLNQKVDAWFLDGFAPAKNPDMWTQNLFNAMARLARPGGTLATFTSAGFVRRGLQDAGFTMQKRKGFGRKREMLCGVMEQTLPLPCSAPWFNRTGSSKREAAIIGGGIACALLSLALLRRGWQVTLYCADEAPALGASGNRQGALYPLLSKHDEALNRFFSNAFTFARRFYDQLPVKFDHDWCGVTQLGWDEKSQHKITQMLSMDLPAELAVAVEANAVEQITGVATNCSGITYPQGGWLCPAELTRNVLELAQQQGLQIYYQYQLQNLSRKDDCWLLNFAGDQQATHSVVVLANGHQISRFSQTSTLPVYSVAGQVSHIPTTPELAELKQVLCYDGYLTPQNPANQHHCIGASYHRGSEDTAYSEDDQQQNRQRLIDCFPQAQWAKEVDVSDKEARCGVRCATRDHLPMVGNVPDYEATLVEYASLAEQKDEAVSAPVFDDLFMFAALGSRGLCSAPLCAEILAAQMSDEPIPMDASTLAALNPNRLWVRKLLKGKAVKAG</sequence>